<keyword id="KW-0975">Bacterial flagellum</keyword>
<keyword id="KW-0998">Cell outer membrane</keyword>
<keyword id="KW-0449">Lipoprotein</keyword>
<keyword id="KW-0472">Membrane</keyword>
<keyword id="KW-0564">Palmitate</keyword>
<keyword id="KW-1185">Reference proteome</keyword>
<keyword id="KW-0732">Signal</keyword>
<evidence type="ECO:0000250" key="1"/>
<evidence type="ECO:0000255" key="2"/>
<evidence type="ECO:0000256" key="3">
    <source>
        <dbReference type="SAM" id="MobiDB-lite"/>
    </source>
</evidence>
<evidence type="ECO:0000305" key="4"/>
<dbReference type="EMBL" id="BX571662">
    <property type="protein sequence ID" value="CAE11103.1"/>
    <property type="status" value="ALT_INIT"/>
    <property type="molecule type" value="Genomic_DNA"/>
</dbReference>
<dbReference type="SMR" id="Q7M7T1"/>
<dbReference type="STRING" id="273121.WS2105"/>
<dbReference type="DNASU" id="2553788"/>
<dbReference type="KEGG" id="wsu:WS2105"/>
<dbReference type="eggNOG" id="COG2063">
    <property type="taxonomic scope" value="Bacteria"/>
</dbReference>
<dbReference type="HOGENOM" id="CLU_069313_1_1_7"/>
<dbReference type="Proteomes" id="UP000000422">
    <property type="component" value="Chromosome"/>
</dbReference>
<dbReference type="GO" id="GO:0009427">
    <property type="term" value="C:bacterial-type flagellum basal body, distal rod, L ring"/>
    <property type="evidence" value="ECO:0007669"/>
    <property type="project" value="InterPro"/>
</dbReference>
<dbReference type="GO" id="GO:0009279">
    <property type="term" value="C:cell outer membrane"/>
    <property type="evidence" value="ECO:0007669"/>
    <property type="project" value="UniProtKB-SubCell"/>
</dbReference>
<dbReference type="GO" id="GO:0003774">
    <property type="term" value="F:cytoskeletal motor activity"/>
    <property type="evidence" value="ECO:0007669"/>
    <property type="project" value="InterPro"/>
</dbReference>
<dbReference type="GO" id="GO:0071973">
    <property type="term" value="P:bacterial-type flagellum-dependent cell motility"/>
    <property type="evidence" value="ECO:0007669"/>
    <property type="project" value="InterPro"/>
</dbReference>
<dbReference type="HAMAP" id="MF_00415">
    <property type="entry name" value="FlgH"/>
    <property type="match status" value="1"/>
</dbReference>
<dbReference type="InterPro" id="IPR000527">
    <property type="entry name" value="Flag_Lring"/>
</dbReference>
<dbReference type="NCBIfam" id="NF001303">
    <property type="entry name" value="PRK00249.1-3"/>
    <property type="match status" value="1"/>
</dbReference>
<dbReference type="PANTHER" id="PTHR34933">
    <property type="entry name" value="FLAGELLAR L-RING PROTEIN"/>
    <property type="match status" value="1"/>
</dbReference>
<dbReference type="PANTHER" id="PTHR34933:SF1">
    <property type="entry name" value="FLAGELLAR L-RING PROTEIN"/>
    <property type="match status" value="1"/>
</dbReference>
<dbReference type="Pfam" id="PF02107">
    <property type="entry name" value="FlgH"/>
    <property type="match status" value="1"/>
</dbReference>
<dbReference type="PRINTS" id="PR01008">
    <property type="entry name" value="FLGLRINGFLGH"/>
</dbReference>
<accession>Q7M7T1</accession>
<proteinExistence type="inferred from homology"/>
<feature type="signal peptide" evidence="2">
    <location>
        <begin position="1"/>
        <end position="16"/>
    </location>
</feature>
<feature type="chain" id="PRO_0000009483" description="Flagellar L-ring protein">
    <location>
        <begin position="17"/>
        <end position="235"/>
    </location>
</feature>
<feature type="region of interest" description="Disordered" evidence="3">
    <location>
        <begin position="83"/>
        <end position="104"/>
    </location>
</feature>
<feature type="compositionally biased region" description="Polar residues" evidence="3">
    <location>
        <begin position="91"/>
        <end position="104"/>
    </location>
</feature>
<feature type="lipid moiety-binding region" description="N-palmitoyl cysteine" evidence="2">
    <location>
        <position position="17"/>
    </location>
</feature>
<feature type="lipid moiety-binding region" description="S-diacylglycerol cysteine" evidence="2">
    <location>
        <position position="17"/>
    </location>
</feature>
<comment type="function">
    <text evidence="1">Assembles around the rod to form the L-ring and probably protects the motor/basal body from shearing forces during rotation.</text>
</comment>
<comment type="subunit">
    <text evidence="1">The basal body constitutes a major portion of the flagellar organelle and consists of four rings (L,P,S, and M) mounted on a central rod.</text>
</comment>
<comment type="subcellular location">
    <subcellularLocation>
        <location evidence="1">Cell outer membrane</location>
        <topology evidence="1">Lipid-anchor</topology>
    </subcellularLocation>
    <subcellularLocation>
        <location evidence="1">Bacterial flagellum basal body</location>
    </subcellularLocation>
</comment>
<comment type="similarity">
    <text evidence="4">Belongs to the FlgH family.</text>
</comment>
<comment type="sequence caution" evidence="4">
    <conflict type="erroneous initiation">
        <sequence resource="EMBL-CDS" id="CAE11103"/>
    </conflict>
</comment>
<sequence length="235" mass="25442">MSGFLLVTLVAALYSGCSVADPQISFKPPEYVEEMPAREVEESFGNAGSLFGQGDNPLFADRRAMKLNDLVTVIINETASASSSGKKDLSETSSSTMNGPSVTFGGPSQSIGNAVNKLNNFTSFGLSTGNNNSTFAGSGTQQRQESFTTTVSARIIKVMENGNYFIEGGREILINGEKQIMRLTGVIRPYDIGRNNTINSRYIADAKIMYETQGEIKKSTEKGWGTKVLESVWPF</sequence>
<gene>
    <name type="primary">flgH</name>
    <name type="ordered locus">WS2105</name>
</gene>
<protein>
    <recommendedName>
        <fullName>Flagellar L-ring protein</fullName>
    </recommendedName>
    <alternativeName>
        <fullName>Basal body L-ring protein</fullName>
    </alternativeName>
</protein>
<name>FLGH_WOLSU</name>
<organism>
    <name type="scientific">Wolinella succinogenes (strain ATCC 29543 / DSM 1740 / CCUG 13145 / JCM 31913 / LMG 7466 / NCTC 11488 / FDC 602W)</name>
    <name type="common">Vibrio succinogenes</name>
    <dbReference type="NCBI Taxonomy" id="273121"/>
    <lineage>
        <taxon>Bacteria</taxon>
        <taxon>Pseudomonadati</taxon>
        <taxon>Campylobacterota</taxon>
        <taxon>Epsilonproteobacteria</taxon>
        <taxon>Campylobacterales</taxon>
        <taxon>Helicobacteraceae</taxon>
        <taxon>Wolinella</taxon>
    </lineage>
</organism>
<reference key="1">
    <citation type="journal article" date="2003" name="Proc. Natl. Acad. Sci. U.S.A.">
        <title>Complete genome sequence and analysis of Wolinella succinogenes.</title>
        <authorList>
            <person name="Baar C."/>
            <person name="Eppinger M."/>
            <person name="Raddatz G."/>
            <person name="Simon J."/>
            <person name="Lanz C."/>
            <person name="Klimmek O."/>
            <person name="Nandakumar R."/>
            <person name="Gross R."/>
            <person name="Rosinus A."/>
            <person name="Keller H."/>
            <person name="Jagtap P."/>
            <person name="Linke B."/>
            <person name="Meyer F."/>
            <person name="Lederer H."/>
            <person name="Schuster S.C."/>
        </authorList>
    </citation>
    <scope>NUCLEOTIDE SEQUENCE [LARGE SCALE GENOMIC DNA]</scope>
    <source>
        <strain>ATCC 29543 / DSM 1740 / CCUG 13145 / JCM 31913 / LMG 7466 / NCTC 11488 / FDC 602W</strain>
    </source>
</reference>